<protein>
    <recommendedName>
        <fullName>Probable protein phosphatase 2C 2</fullName>
        <shortName>OsPP2C02</shortName>
        <ecNumber>3.1.3.16</ecNumber>
    </recommendedName>
</protein>
<reference key="1">
    <citation type="journal article" date="2002" name="Nature">
        <title>The genome sequence and structure of rice chromosome 1.</title>
        <authorList>
            <person name="Sasaki T."/>
            <person name="Matsumoto T."/>
            <person name="Yamamoto K."/>
            <person name="Sakata K."/>
            <person name="Baba T."/>
            <person name="Katayose Y."/>
            <person name="Wu J."/>
            <person name="Niimura Y."/>
            <person name="Cheng Z."/>
            <person name="Nagamura Y."/>
            <person name="Antonio B.A."/>
            <person name="Kanamori H."/>
            <person name="Hosokawa S."/>
            <person name="Masukawa M."/>
            <person name="Arikawa K."/>
            <person name="Chiden Y."/>
            <person name="Hayashi M."/>
            <person name="Okamoto M."/>
            <person name="Ando T."/>
            <person name="Aoki H."/>
            <person name="Arita K."/>
            <person name="Hamada M."/>
            <person name="Harada C."/>
            <person name="Hijishita S."/>
            <person name="Honda M."/>
            <person name="Ichikawa Y."/>
            <person name="Idonuma A."/>
            <person name="Iijima M."/>
            <person name="Ikeda M."/>
            <person name="Ikeno M."/>
            <person name="Ito S."/>
            <person name="Ito T."/>
            <person name="Ito Y."/>
            <person name="Ito Y."/>
            <person name="Iwabuchi A."/>
            <person name="Kamiya K."/>
            <person name="Karasawa W."/>
            <person name="Katagiri S."/>
            <person name="Kikuta A."/>
            <person name="Kobayashi N."/>
            <person name="Kono I."/>
            <person name="Machita K."/>
            <person name="Maehara T."/>
            <person name="Mizuno H."/>
            <person name="Mizubayashi T."/>
            <person name="Mukai Y."/>
            <person name="Nagasaki H."/>
            <person name="Nakashima M."/>
            <person name="Nakama Y."/>
            <person name="Nakamichi Y."/>
            <person name="Nakamura M."/>
            <person name="Namiki N."/>
            <person name="Negishi M."/>
            <person name="Ohta I."/>
            <person name="Ono N."/>
            <person name="Saji S."/>
            <person name="Sakai K."/>
            <person name="Shibata M."/>
            <person name="Shimokawa T."/>
            <person name="Shomura A."/>
            <person name="Song J."/>
            <person name="Takazaki Y."/>
            <person name="Terasawa K."/>
            <person name="Tsuji K."/>
            <person name="Waki K."/>
            <person name="Yamagata H."/>
            <person name="Yamane H."/>
            <person name="Yoshiki S."/>
            <person name="Yoshihara R."/>
            <person name="Yukawa K."/>
            <person name="Zhong H."/>
            <person name="Iwama H."/>
            <person name="Endo T."/>
            <person name="Ito H."/>
            <person name="Hahn J.H."/>
            <person name="Kim H.-I."/>
            <person name="Eun M.-Y."/>
            <person name="Yano M."/>
            <person name="Jiang J."/>
            <person name="Gojobori T."/>
        </authorList>
    </citation>
    <scope>NUCLEOTIDE SEQUENCE [LARGE SCALE GENOMIC DNA]</scope>
    <source>
        <strain>cv. Nipponbare</strain>
    </source>
</reference>
<reference key="2">
    <citation type="journal article" date="2005" name="Nature">
        <title>The map-based sequence of the rice genome.</title>
        <authorList>
            <consortium name="International rice genome sequencing project (IRGSP)"/>
        </authorList>
    </citation>
    <scope>NUCLEOTIDE SEQUENCE [LARGE SCALE GENOMIC DNA]</scope>
    <source>
        <strain>cv. Nipponbare</strain>
    </source>
</reference>
<reference key="3">
    <citation type="journal article" date="2008" name="Nucleic Acids Res.">
        <title>The rice annotation project database (RAP-DB): 2008 update.</title>
        <authorList>
            <consortium name="The rice annotation project (RAP)"/>
        </authorList>
    </citation>
    <scope>GENOME REANNOTATION</scope>
    <source>
        <strain>cv. Nipponbare</strain>
    </source>
</reference>
<reference key="4">
    <citation type="journal article" date="2013" name="Rice">
        <title>Improvement of the Oryza sativa Nipponbare reference genome using next generation sequence and optical map data.</title>
        <authorList>
            <person name="Kawahara Y."/>
            <person name="de la Bastide M."/>
            <person name="Hamilton J.P."/>
            <person name="Kanamori H."/>
            <person name="McCombie W.R."/>
            <person name="Ouyang S."/>
            <person name="Schwartz D.C."/>
            <person name="Tanaka T."/>
            <person name="Wu J."/>
            <person name="Zhou S."/>
            <person name="Childs K.L."/>
            <person name="Davidson R.M."/>
            <person name="Lin H."/>
            <person name="Quesada-Ocampo L."/>
            <person name="Vaillancourt B."/>
            <person name="Sakai H."/>
            <person name="Lee S.S."/>
            <person name="Kim J."/>
            <person name="Numa H."/>
            <person name="Itoh T."/>
            <person name="Buell C.R."/>
            <person name="Matsumoto T."/>
        </authorList>
    </citation>
    <scope>GENOME REANNOTATION</scope>
    <source>
        <strain>cv. Nipponbare</strain>
    </source>
</reference>
<reference key="5">
    <citation type="journal article" date="2005" name="PLoS Biol.">
        <title>The genomes of Oryza sativa: a history of duplications.</title>
        <authorList>
            <person name="Yu J."/>
            <person name="Wang J."/>
            <person name="Lin W."/>
            <person name="Li S."/>
            <person name="Li H."/>
            <person name="Zhou J."/>
            <person name="Ni P."/>
            <person name="Dong W."/>
            <person name="Hu S."/>
            <person name="Zeng C."/>
            <person name="Zhang J."/>
            <person name="Zhang Y."/>
            <person name="Li R."/>
            <person name="Xu Z."/>
            <person name="Li S."/>
            <person name="Li X."/>
            <person name="Zheng H."/>
            <person name="Cong L."/>
            <person name="Lin L."/>
            <person name="Yin J."/>
            <person name="Geng J."/>
            <person name="Li G."/>
            <person name="Shi J."/>
            <person name="Liu J."/>
            <person name="Lv H."/>
            <person name="Li J."/>
            <person name="Wang J."/>
            <person name="Deng Y."/>
            <person name="Ran L."/>
            <person name="Shi X."/>
            <person name="Wang X."/>
            <person name="Wu Q."/>
            <person name="Li C."/>
            <person name="Ren X."/>
            <person name="Wang J."/>
            <person name="Wang X."/>
            <person name="Li D."/>
            <person name="Liu D."/>
            <person name="Zhang X."/>
            <person name="Ji Z."/>
            <person name="Zhao W."/>
            <person name="Sun Y."/>
            <person name="Zhang Z."/>
            <person name="Bao J."/>
            <person name="Han Y."/>
            <person name="Dong L."/>
            <person name="Ji J."/>
            <person name="Chen P."/>
            <person name="Wu S."/>
            <person name="Liu J."/>
            <person name="Xiao Y."/>
            <person name="Bu D."/>
            <person name="Tan J."/>
            <person name="Yang L."/>
            <person name="Ye C."/>
            <person name="Zhang J."/>
            <person name="Xu J."/>
            <person name="Zhou Y."/>
            <person name="Yu Y."/>
            <person name="Zhang B."/>
            <person name="Zhuang S."/>
            <person name="Wei H."/>
            <person name="Liu B."/>
            <person name="Lei M."/>
            <person name="Yu H."/>
            <person name="Li Y."/>
            <person name="Xu H."/>
            <person name="Wei S."/>
            <person name="He X."/>
            <person name="Fang L."/>
            <person name="Zhang Z."/>
            <person name="Zhang Y."/>
            <person name="Huang X."/>
            <person name="Su Z."/>
            <person name="Tong W."/>
            <person name="Li J."/>
            <person name="Tong Z."/>
            <person name="Li S."/>
            <person name="Ye J."/>
            <person name="Wang L."/>
            <person name="Fang L."/>
            <person name="Lei T."/>
            <person name="Chen C.-S."/>
            <person name="Chen H.-C."/>
            <person name="Xu Z."/>
            <person name="Li H."/>
            <person name="Huang H."/>
            <person name="Zhang F."/>
            <person name="Xu H."/>
            <person name="Li N."/>
            <person name="Zhao C."/>
            <person name="Li S."/>
            <person name="Dong L."/>
            <person name="Huang Y."/>
            <person name="Li L."/>
            <person name="Xi Y."/>
            <person name="Qi Q."/>
            <person name="Li W."/>
            <person name="Zhang B."/>
            <person name="Hu W."/>
            <person name="Zhang Y."/>
            <person name="Tian X."/>
            <person name="Jiao Y."/>
            <person name="Liang X."/>
            <person name="Jin J."/>
            <person name="Gao L."/>
            <person name="Zheng W."/>
            <person name="Hao B."/>
            <person name="Liu S.-M."/>
            <person name="Wang W."/>
            <person name="Yuan L."/>
            <person name="Cao M."/>
            <person name="McDermott J."/>
            <person name="Samudrala R."/>
            <person name="Wang J."/>
            <person name="Wong G.K.-S."/>
            <person name="Yang H."/>
        </authorList>
    </citation>
    <scope>NUCLEOTIDE SEQUENCE [LARGE SCALE GENOMIC DNA]</scope>
    <source>
        <strain>cv. Nipponbare</strain>
    </source>
</reference>
<reference key="6">
    <citation type="journal article" date="2003" name="Science">
        <title>Collection, mapping, and annotation of over 28,000 cDNA clones from japonica rice.</title>
        <authorList>
            <consortium name="The rice full-length cDNA consortium"/>
        </authorList>
    </citation>
    <scope>NUCLEOTIDE SEQUENCE [LARGE SCALE MRNA]</scope>
    <source>
        <strain>cv. Nipponbare</strain>
    </source>
</reference>
<reference key="7">
    <citation type="journal article" date="2008" name="BMC Genomics">
        <title>Genome-wide and expression analysis of protein phosphatase 2C in rice and Arabidopsis.</title>
        <authorList>
            <person name="Xue T."/>
            <person name="Wang D."/>
            <person name="Zhang S."/>
            <person name="Ehlting J."/>
            <person name="Ni F."/>
            <person name="Jacab S."/>
            <person name="Zheng C."/>
            <person name="Zhong Y."/>
        </authorList>
    </citation>
    <scope>GENE FAMILY</scope>
    <scope>NOMENCLATURE</scope>
</reference>
<dbReference type="EC" id="3.1.3.16"/>
<dbReference type="EMBL" id="AP002820">
    <property type="protein sequence ID" value="BAB12036.1"/>
    <property type="molecule type" value="Genomic_DNA"/>
</dbReference>
<dbReference type="EMBL" id="AP008207">
    <property type="protein sequence ID" value="BAF04715.1"/>
    <property type="molecule type" value="Genomic_DNA"/>
</dbReference>
<dbReference type="EMBL" id="AP014957">
    <property type="protein sequence ID" value="BAS71682.1"/>
    <property type="molecule type" value="Genomic_DNA"/>
</dbReference>
<dbReference type="EMBL" id="CM000138">
    <property type="protein sequence ID" value="EAZ11544.1"/>
    <property type="molecule type" value="Genomic_DNA"/>
</dbReference>
<dbReference type="EMBL" id="AK070333">
    <property type="protein sequence ID" value="BAG91891.1"/>
    <property type="molecule type" value="mRNA"/>
</dbReference>
<dbReference type="RefSeq" id="XP_015622472.1">
    <property type="nucleotide sequence ID" value="XM_015766986.1"/>
</dbReference>
<dbReference type="SMR" id="Q9FYN7"/>
<dbReference type="FunCoup" id="Q9FYN7">
    <property type="interactions" value="4"/>
</dbReference>
<dbReference type="STRING" id="39947.Q9FYN7"/>
<dbReference type="PaxDb" id="39947-Q9FYN7"/>
<dbReference type="EnsemblPlants" id="Os01t0295700-01">
    <property type="protein sequence ID" value="Os01t0295700-01"/>
    <property type="gene ID" value="Os01g0295700"/>
</dbReference>
<dbReference type="Gramene" id="Os01t0295700-01">
    <property type="protein sequence ID" value="Os01t0295700-01"/>
    <property type="gene ID" value="Os01g0295700"/>
</dbReference>
<dbReference type="KEGG" id="dosa:Os01g0295700"/>
<dbReference type="eggNOG" id="KOG0698">
    <property type="taxonomic scope" value="Eukaryota"/>
</dbReference>
<dbReference type="HOGENOM" id="CLU_013173_21_0_1"/>
<dbReference type="InParanoid" id="Q9FYN7"/>
<dbReference type="OMA" id="DHRPNYA"/>
<dbReference type="OrthoDB" id="10264738at2759"/>
<dbReference type="Proteomes" id="UP000000763">
    <property type="component" value="Chromosome 1"/>
</dbReference>
<dbReference type="Proteomes" id="UP000007752">
    <property type="component" value="Chromosome 1"/>
</dbReference>
<dbReference type="Proteomes" id="UP000059680">
    <property type="component" value="Chromosome 1"/>
</dbReference>
<dbReference type="GO" id="GO:0046872">
    <property type="term" value="F:metal ion binding"/>
    <property type="evidence" value="ECO:0007669"/>
    <property type="project" value="UniProtKB-KW"/>
</dbReference>
<dbReference type="GO" id="GO:0004722">
    <property type="term" value="F:protein serine/threonine phosphatase activity"/>
    <property type="evidence" value="ECO:0007669"/>
    <property type="project" value="UniProtKB-EC"/>
</dbReference>
<dbReference type="GO" id="GO:0007165">
    <property type="term" value="P:signal transduction"/>
    <property type="evidence" value="ECO:0000318"/>
    <property type="project" value="GO_Central"/>
</dbReference>
<dbReference type="CDD" id="cd00143">
    <property type="entry name" value="PP2Cc"/>
    <property type="match status" value="1"/>
</dbReference>
<dbReference type="FunFam" id="3.60.40.10:FF:000004">
    <property type="entry name" value="Probable protein phosphatase 2C 22"/>
    <property type="match status" value="1"/>
</dbReference>
<dbReference type="Gene3D" id="3.60.40.10">
    <property type="entry name" value="PPM-type phosphatase domain"/>
    <property type="match status" value="1"/>
</dbReference>
<dbReference type="InterPro" id="IPR015655">
    <property type="entry name" value="PP2C"/>
</dbReference>
<dbReference type="InterPro" id="IPR000222">
    <property type="entry name" value="PP2C_BS"/>
</dbReference>
<dbReference type="InterPro" id="IPR036457">
    <property type="entry name" value="PPM-type-like_dom_sf"/>
</dbReference>
<dbReference type="InterPro" id="IPR001932">
    <property type="entry name" value="PPM-type_phosphatase-like_dom"/>
</dbReference>
<dbReference type="PANTHER" id="PTHR13832">
    <property type="entry name" value="PROTEIN PHOSPHATASE 2C"/>
    <property type="match status" value="1"/>
</dbReference>
<dbReference type="PANTHER" id="PTHR13832:SF826">
    <property type="entry name" value="PROTEIN PHOSPHATASE 2C 2-RELATED"/>
    <property type="match status" value="1"/>
</dbReference>
<dbReference type="Pfam" id="PF00481">
    <property type="entry name" value="PP2C"/>
    <property type="match status" value="1"/>
</dbReference>
<dbReference type="SMART" id="SM00331">
    <property type="entry name" value="PP2C_SIG"/>
    <property type="match status" value="1"/>
</dbReference>
<dbReference type="SMART" id="SM00332">
    <property type="entry name" value="PP2Cc"/>
    <property type="match status" value="1"/>
</dbReference>
<dbReference type="SUPFAM" id="SSF81606">
    <property type="entry name" value="PP2C-like"/>
    <property type="match status" value="1"/>
</dbReference>
<dbReference type="PROSITE" id="PS01032">
    <property type="entry name" value="PPM_1"/>
    <property type="match status" value="1"/>
</dbReference>
<dbReference type="PROSITE" id="PS51746">
    <property type="entry name" value="PPM_2"/>
    <property type="match status" value="1"/>
</dbReference>
<keyword id="KW-0378">Hydrolase</keyword>
<keyword id="KW-0460">Magnesium</keyword>
<keyword id="KW-0464">Manganese</keyword>
<keyword id="KW-0479">Metal-binding</keyword>
<keyword id="KW-0904">Protein phosphatase</keyword>
<keyword id="KW-1185">Reference proteome</keyword>
<name>P2C02_ORYSJ</name>
<organism>
    <name type="scientific">Oryza sativa subsp. japonica</name>
    <name type="common">Rice</name>
    <dbReference type="NCBI Taxonomy" id="39947"/>
    <lineage>
        <taxon>Eukaryota</taxon>
        <taxon>Viridiplantae</taxon>
        <taxon>Streptophyta</taxon>
        <taxon>Embryophyta</taxon>
        <taxon>Tracheophyta</taxon>
        <taxon>Spermatophyta</taxon>
        <taxon>Magnoliopsida</taxon>
        <taxon>Liliopsida</taxon>
        <taxon>Poales</taxon>
        <taxon>Poaceae</taxon>
        <taxon>BOP clade</taxon>
        <taxon>Oryzoideae</taxon>
        <taxon>Oryzeae</taxon>
        <taxon>Oryzinae</taxon>
        <taxon>Oryza</taxon>
        <taxon>Oryza sativa</taxon>
    </lineage>
</organism>
<comment type="catalytic activity">
    <reaction>
        <text>O-phospho-L-seryl-[protein] + H2O = L-seryl-[protein] + phosphate</text>
        <dbReference type="Rhea" id="RHEA:20629"/>
        <dbReference type="Rhea" id="RHEA-COMP:9863"/>
        <dbReference type="Rhea" id="RHEA-COMP:11604"/>
        <dbReference type="ChEBI" id="CHEBI:15377"/>
        <dbReference type="ChEBI" id="CHEBI:29999"/>
        <dbReference type="ChEBI" id="CHEBI:43474"/>
        <dbReference type="ChEBI" id="CHEBI:83421"/>
        <dbReference type="EC" id="3.1.3.16"/>
    </reaction>
</comment>
<comment type="catalytic activity">
    <reaction>
        <text>O-phospho-L-threonyl-[protein] + H2O = L-threonyl-[protein] + phosphate</text>
        <dbReference type="Rhea" id="RHEA:47004"/>
        <dbReference type="Rhea" id="RHEA-COMP:11060"/>
        <dbReference type="Rhea" id="RHEA-COMP:11605"/>
        <dbReference type="ChEBI" id="CHEBI:15377"/>
        <dbReference type="ChEBI" id="CHEBI:30013"/>
        <dbReference type="ChEBI" id="CHEBI:43474"/>
        <dbReference type="ChEBI" id="CHEBI:61977"/>
        <dbReference type="EC" id="3.1.3.16"/>
    </reaction>
</comment>
<comment type="cofactor">
    <cofactor evidence="1">
        <name>Mg(2+)</name>
        <dbReference type="ChEBI" id="CHEBI:18420"/>
    </cofactor>
    <cofactor evidence="1">
        <name>Mn(2+)</name>
        <dbReference type="ChEBI" id="CHEBI:29035"/>
    </cofactor>
    <text evidence="1">Binds 2 magnesium or manganese ions per subunit.</text>
</comment>
<comment type="similarity">
    <text evidence="3">Belongs to the PP2C family.</text>
</comment>
<gene>
    <name type="ordered locus">Os01g0295700</name>
    <name type="ordered locus">LOC_Os01g19130</name>
    <name type="ORF">OsJ_001369</name>
    <name type="ORF">P0702D12.28</name>
</gene>
<feature type="chain" id="PRO_0000363248" description="Probable protein phosphatase 2C 2">
    <location>
        <begin position="1"/>
        <end position="380"/>
    </location>
</feature>
<feature type="domain" description="PPM-type phosphatase" evidence="2">
    <location>
        <begin position="69"/>
        <end position="339"/>
    </location>
</feature>
<feature type="binding site" evidence="1">
    <location>
        <position position="113"/>
    </location>
    <ligand>
        <name>Mn(2+)</name>
        <dbReference type="ChEBI" id="CHEBI:29035"/>
        <label>1</label>
    </ligand>
</feature>
<feature type="binding site" evidence="1">
    <location>
        <position position="113"/>
    </location>
    <ligand>
        <name>Mn(2+)</name>
        <dbReference type="ChEBI" id="CHEBI:29035"/>
        <label>2</label>
    </ligand>
</feature>
<feature type="binding site" evidence="1">
    <location>
        <position position="114"/>
    </location>
    <ligand>
        <name>Mn(2+)</name>
        <dbReference type="ChEBI" id="CHEBI:29035"/>
        <label>1</label>
    </ligand>
</feature>
<feature type="binding site" evidence="1">
    <location>
        <position position="287"/>
    </location>
    <ligand>
        <name>Mn(2+)</name>
        <dbReference type="ChEBI" id="CHEBI:29035"/>
        <label>2</label>
    </ligand>
</feature>
<feature type="binding site" evidence="1">
    <location>
        <position position="330"/>
    </location>
    <ligand>
        <name>Mn(2+)</name>
        <dbReference type="ChEBI" id="CHEBI:29035"/>
        <label>2</label>
    </ligand>
</feature>
<sequence length="380" mass="41821">MVAGAEVMHQVVPLLEASFHRRCSVKGVDEVSPPVEEMSPEAASEAAIEVPELMVKAPVESLQFSPNIRSGSFADIGPRRYMEDEHIRIDDLSGHLGSLLMCPAPNAFYGVFDGHGGPDAAAYMKRHAIRLFFEDSEFPQALEEDESFYESVEKSIHNAFLSADLALADDLAISRSSGTTALAALIFGRQLLVANAGDCRAVLCRKGVAVEMSRDHRPTYDAEHERITECGGYIEDGYLNGVLSVTRALGDWDMKMPQGSRSPLIAEPEFQQTTLTEDDEFLIIGCDGIWDVMSSQHAVTIVRKGLRRHDDPERCARELAMEAKRLQTFDNLTVIVICFGSELGGGSPSSEQAPIRRVRCCKSLSSEALCNLKKWLEPNE</sequence>
<accession>Q9FYN7</accession>
<accession>A0A0P0V1S6</accession>
<proteinExistence type="evidence at transcript level"/>
<evidence type="ECO:0000250" key="1"/>
<evidence type="ECO:0000255" key="2">
    <source>
        <dbReference type="PROSITE-ProRule" id="PRU01082"/>
    </source>
</evidence>
<evidence type="ECO:0000305" key="3"/>